<protein>
    <recommendedName>
        <fullName evidence="1">ATP synthase subunit a</fullName>
    </recommendedName>
    <alternativeName>
        <fullName evidence="1">ATP synthase F0 sector subunit a</fullName>
    </alternativeName>
    <alternativeName>
        <fullName evidence="1">F-ATPase subunit 6</fullName>
    </alternativeName>
</protein>
<organism>
    <name type="scientific">Escherichia coli (strain ATCC 8739 / DSM 1576 / NBRC 3972 / NCIMB 8545 / WDCM 00012 / Crooks)</name>
    <dbReference type="NCBI Taxonomy" id="481805"/>
    <lineage>
        <taxon>Bacteria</taxon>
        <taxon>Pseudomonadati</taxon>
        <taxon>Pseudomonadota</taxon>
        <taxon>Gammaproteobacteria</taxon>
        <taxon>Enterobacterales</taxon>
        <taxon>Enterobacteriaceae</taxon>
        <taxon>Escherichia</taxon>
    </lineage>
</organism>
<gene>
    <name evidence="1" type="primary">atpB</name>
    <name type="ordered locus">EcolC_4256</name>
</gene>
<proteinExistence type="inferred from homology"/>
<evidence type="ECO:0000255" key="1">
    <source>
        <dbReference type="HAMAP-Rule" id="MF_01393"/>
    </source>
</evidence>
<dbReference type="EMBL" id="CP000946">
    <property type="protein sequence ID" value="ACA79852.1"/>
    <property type="molecule type" value="Genomic_DNA"/>
</dbReference>
<dbReference type="RefSeq" id="WP_000135625.1">
    <property type="nucleotide sequence ID" value="NZ_MTFT01000013.1"/>
</dbReference>
<dbReference type="BMRB" id="B1IX00"/>
<dbReference type="SMR" id="B1IX00"/>
<dbReference type="GeneID" id="93778229"/>
<dbReference type="KEGG" id="ecl:EcolC_4256"/>
<dbReference type="HOGENOM" id="CLU_041018_1_0_6"/>
<dbReference type="GO" id="GO:0005886">
    <property type="term" value="C:plasma membrane"/>
    <property type="evidence" value="ECO:0007669"/>
    <property type="project" value="UniProtKB-SubCell"/>
</dbReference>
<dbReference type="GO" id="GO:0045259">
    <property type="term" value="C:proton-transporting ATP synthase complex"/>
    <property type="evidence" value="ECO:0007669"/>
    <property type="project" value="UniProtKB-KW"/>
</dbReference>
<dbReference type="GO" id="GO:0046933">
    <property type="term" value="F:proton-transporting ATP synthase activity, rotational mechanism"/>
    <property type="evidence" value="ECO:0007669"/>
    <property type="project" value="UniProtKB-UniRule"/>
</dbReference>
<dbReference type="GO" id="GO:0042777">
    <property type="term" value="P:proton motive force-driven plasma membrane ATP synthesis"/>
    <property type="evidence" value="ECO:0007669"/>
    <property type="project" value="TreeGrafter"/>
</dbReference>
<dbReference type="CDD" id="cd00310">
    <property type="entry name" value="ATP-synt_Fo_a_6"/>
    <property type="match status" value="1"/>
</dbReference>
<dbReference type="FunFam" id="1.20.120.220:FF:000002">
    <property type="entry name" value="ATP synthase subunit a"/>
    <property type="match status" value="1"/>
</dbReference>
<dbReference type="Gene3D" id="1.20.120.220">
    <property type="entry name" value="ATP synthase, F0 complex, subunit A"/>
    <property type="match status" value="1"/>
</dbReference>
<dbReference type="HAMAP" id="MF_01393">
    <property type="entry name" value="ATP_synth_a_bact"/>
    <property type="match status" value="1"/>
</dbReference>
<dbReference type="InterPro" id="IPR045082">
    <property type="entry name" value="ATP_syn_F0_a_bact/chloroplast"/>
</dbReference>
<dbReference type="InterPro" id="IPR000568">
    <property type="entry name" value="ATP_synth_F0_asu"/>
</dbReference>
<dbReference type="InterPro" id="IPR023011">
    <property type="entry name" value="ATP_synth_F0_asu_AS"/>
</dbReference>
<dbReference type="InterPro" id="IPR035908">
    <property type="entry name" value="F0_ATP_A_sf"/>
</dbReference>
<dbReference type="NCBIfam" id="TIGR01131">
    <property type="entry name" value="ATP_synt_6_or_A"/>
    <property type="match status" value="1"/>
</dbReference>
<dbReference type="NCBIfam" id="NF004477">
    <property type="entry name" value="PRK05815.1-1"/>
    <property type="match status" value="1"/>
</dbReference>
<dbReference type="PANTHER" id="PTHR42823">
    <property type="entry name" value="ATP SYNTHASE SUBUNIT A, CHLOROPLASTIC"/>
    <property type="match status" value="1"/>
</dbReference>
<dbReference type="PANTHER" id="PTHR42823:SF3">
    <property type="entry name" value="ATP SYNTHASE SUBUNIT A, CHLOROPLASTIC"/>
    <property type="match status" value="1"/>
</dbReference>
<dbReference type="Pfam" id="PF00119">
    <property type="entry name" value="ATP-synt_A"/>
    <property type="match status" value="1"/>
</dbReference>
<dbReference type="PRINTS" id="PR00123">
    <property type="entry name" value="ATPASEA"/>
</dbReference>
<dbReference type="SUPFAM" id="SSF81336">
    <property type="entry name" value="F1F0 ATP synthase subunit A"/>
    <property type="match status" value="1"/>
</dbReference>
<dbReference type="PROSITE" id="PS00449">
    <property type="entry name" value="ATPASE_A"/>
    <property type="match status" value="1"/>
</dbReference>
<accession>B1IX00</accession>
<comment type="function">
    <text evidence="1">Key component of the proton channel; it plays a direct role in the translocation of protons across the membrane.</text>
</comment>
<comment type="subunit">
    <text evidence="1">F-type ATPases have 2 components, CF(1) - the catalytic core - and CF(0) - the membrane proton channel. CF(1) has five subunits: alpha(3), beta(3), gamma(1), delta(1), epsilon(1). CF(0) has three main subunits: a(1), b(2) and c(9-12). The alpha and beta chains form an alternating ring which encloses part of the gamma chain. CF(1) is attached to CF(0) by a central stalk formed by the gamma and epsilon chains, while a peripheral stalk is formed by the delta and b chains.</text>
</comment>
<comment type="subcellular location">
    <subcellularLocation>
        <location evidence="1">Cell inner membrane</location>
        <topology evidence="1">Multi-pass membrane protein</topology>
    </subcellularLocation>
</comment>
<comment type="similarity">
    <text evidence="1">Belongs to the ATPase A chain family.</text>
</comment>
<reference key="1">
    <citation type="submission" date="2008-02" db="EMBL/GenBank/DDBJ databases">
        <title>Complete sequence of Escherichia coli C str. ATCC 8739.</title>
        <authorList>
            <person name="Copeland A."/>
            <person name="Lucas S."/>
            <person name="Lapidus A."/>
            <person name="Glavina del Rio T."/>
            <person name="Dalin E."/>
            <person name="Tice H."/>
            <person name="Bruce D."/>
            <person name="Goodwin L."/>
            <person name="Pitluck S."/>
            <person name="Kiss H."/>
            <person name="Brettin T."/>
            <person name="Detter J.C."/>
            <person name="Han C."/>
            <person name="Kuske C.R."/>
            <person name="Schmutz J."/>
            <person name="Larimer F."/>
            <person name="Land M."/>
            <person name="Hauser L."/>
            <person name="Kyrpides N."/>
            <person name="Mikhailova N."/>
            <person name="Ingram L."/>
            <person name="Richardson P."/>
        </authorList>
    </citation>
    <scope>NUCLEOTIDE SEQUENCE [LARGE SCALE GENOMIC DNA]</scope>
    <source>
        <strain>ATCC 8739 / DSM 1576 / NBRC 3972 / NCIMB 8545 / WDCM 00012 / Crooks</strain>
    </source>
</reference>
<name>ATP6_ECOLC</name>
<feature type="chain" id="PRO_0000362299" description="ATP synthase subunit a">
    <location>
        <begin position="1"/>
        <end position="271"/>
    </location>
</feature>
<feature type="transmembrane region" description="Helical" evidence="1">
    <location>
        <begin position="40"/>
        <end position="60"/>
    </location>
</feature>
<feature type="transmembrane region" description="Helical" evidence="1">
    <location>
        <begin position="100"/>
        <end position="120"/>
    </location>
</feature>
<feature type="transmembrane region" description="Helical" evidence="1">
    <location>
        <begin position="146"/>
        <end position="166"/>
    </location>
</feature>
<feature type="transmembrane region" description="Helical" evidence="1">
    <location>
        <begin position="220"/>
        <end position="240"/>
    </location>
</feature>
<feature type="transmembrane region" description="Helical" evidence="1">
    <location>
        <begin position="242"/>
        <end position="262"/>
    </location>
</feature>
<keyword id="KW-0066">ATP synthesis</keyword>
<keyword id="KW-0997">Cell inner membrane</keyword>
<keyword id="KW-1003">Cell membrane</keyword>
<keyword id="KW-0138">CF(0)</keyword>
<keyword id="KW-0375">Hydrogen ion transport</keyword>
<keyword id="KW-0406">Ion transport</keyword>
<keyword id="KW-0472">Membrane</keyword>
<keyword id="KW-0812">Transmembrane</keyword>
<keyword id="KW-1133">Transmembrane helix</keyword>
<keyword id="KW-0813">Transport</keyword>
<sequence length="271" mass="30303">MASENMTPQDYIGHHLNNLQLDLRTFSLVDPQNPPATFWTINIDSMFFSVVLGLLFLVLFRSVAKKATSGVPGKFQTAIELVIGFVNGSVKDMYHGKSKLIAPLALTIFVWVFLMNLMDLLPIDLLPYIAEHVLGLPALRVVPSADVNVTLSMALGVFILILFYSIKMKGIGGFTKELTLQPFNHWAFIPVNLILEGVSLLSKPVSLGLRLFGNMYAGELIFILIAGLLPWWSQWILNVPWAIFHILIITLQAFIFMVLTIVYLSMASEEH</sequence>